<sequence>MKKVLVKAVHCYQRWISPALPPACRYYPTCSNYMIQAIEKHGPDKGLAMGTARILRCHPFCQPGYDLVPEHFSLRRNWAEPEKKEEEDSK</sequence>
<name>YIDD_LACLM</name>
<feature type="chain" id="PRO_1000013096" description="Putative membrane protein insertion efficiency factor">
    <location>
        <begin position="1"/>
        <end position="90"/>
    </location>
</feature>
<proteinExistence type="inferred from homology"/>
<accession>A2RJA2</accession>
<reference key="1">
    <citation type="journal article" date="2007" name="J. Bacteriol.">
        <title>The complete genome sequence of the lactic acid bacterial paradigm Lactococcus lactis subsp. cremoris MG1363.</title>
        <authorList>
            <person name="Wegmann U."/>
            <person name="O'Connell-Motherway M."/>
            <person name="Zomer A."/>
            <person name="Buist G."/>
            <person name="Shearman C."/>
            <person name="Canchaya C."/>
            <person name="Ventura M."/>
            <person name="Goesmann A."/>
            <person name="Gasson M.J."/>
            <person name="Kuipers O.P."/>
            <person name="van Sinderen D."/>
            <person name="Kok J."/>
        </authorList>
    </citation>
    <scope>NUCLEOTIDE SEQUENCE [LARGE SCALE GENOMIC DNA]</scope>
    <source>
        <strain>MG1363</strain>
    </source>
</reference>
<organism>
    <name type="scientific">Lactococcus lactis subsp. cremoris (strain MG1363)</name>
    <dbReference type="NCBI Taxonomy" id="416870"/>
    <lineage>
        <taxon>Bacteria</taxon>
        <taxon>Bacillati</taxon>
        <taxon>Bacillota</taxon>
        <taxon>Bacilli</taxon>
        <taxon>Lactobacillales</taxon>
        <taxon>Streptococcaceae</taxon>
        <taxon>Lactococcus</taxon>
        <taxon>Lactococcus cremoris subsp. cremoris</taxon>
    </lineage>
</organism>
<protein>
    <recommendedName>
        <fullName evidence="1">Putative membrane protein insertion efficiency factor</fullName>
    </recommendedName>
</protein>
<evidence type="ECO:0000255" key="1">
    <source>
        <dbReference type="HAMAP-Rule" id="MF_00386"/>
    </source>
</evidence>
<gene>
    <name type="ordered locus">llmg_0750</name>
</gene>
<keyword id="KW-1003">Cell membrane</keyword>
<keyword id="KW-0472">Membrane</keyword>
<comment type="function">
    <text evidence="1">Could be involved in insertion of integral membrane proteins into the membrane.</text>
</comment>
<comment type="subcellular location">
    <subcellularLocation>
        <location evidence="1">Cell membrane</location>
        <topology evidence="1">Peripheral membrane protein</topology>
        <orientation evidence="1">Cytoplasmic side</orientation>
    </subcellularLocation>
</comment>
<comment type="similarity">
    <text evidence="1">Belongs to the UPF0161 family.</text>
</comment>
<dbReference type="EMBL" id="AM406671">
    <property type="protein sequence ID" value="CAL97354.1"/>
    <property type="molecule type" value="Genomic_DNA"/>
</dbReference>
<dbReference type="RefSeq" id="WP_011834736.1">
    <property type="nucleotide sequence ID" value="NC_009004.1"/>
</dbReference>
<dbReference type="STRING" id="416870.llmg_0750"/>
<dbReference type="KEGG" id="llm:llmg_0750"/>
<dbReference type="eggNOG" id="COG0759">
    <property type="taxonomic scope" value="Bacteria"/>
</dbReference>
<dbReference type="HOGENOM" id="CLU_144811_2_2_9"/>
<dbReference type="OrthoDB" id="9801753at2"/>
<dbReference type="PhylomeDB" id="A2RJA2"/>
<dbReference type="Proteomes" id="UP000000364">
    <property type="component" value="Chromosome"/>
</dbReference>
<dbReference type="GO" id="GO:0005886">
    <property type="term" value="C:plasma membrane"/>
    <property type="evidence" value="ECO:0007669"/>
    <property type="project" value="UniProtKB-SubCell"/>
</dbReference>
<dbReference type="HAMAP" id="MF_00386">
    <property type="entry name" value="UPF0161_YidD"/>
    <property type="match status" value="1"/>
</dbReference>
<dbReference type="InterPro" id="IPR002696">
    <property type="entry name" value="Membr_insert_effic_factor_YidD"/>
</dbReference>
<dbReference type="NCBIfam" id="TIGR00278">
    <property type="entry name" value="membrane protein insertion efficiency factor YidD"/>
    <property type="match status" value="1"/>
</dbReference>
<dbReference type="PANTHER" id="PTHR33383">
    <property type="entry name" value="MEMBRANE PROTEIN INSERTION EFFICIENCY FACTOR-RELATED"/>
    <property type="match status" value="1"/>
</dbReference>
<dbReference type="PANTHER" id="PTHR33383:SF1">
    <property type="entry name" value="MEMBRANE PROTEIN INSERTION EFFICIENCY FACTOR-RELATED"/>
    <property type="match status" value="1"/>
</dbReference>
<dbReference type="Pfam" id="PF01809">
    <property type="entry name" value="YidD"/>
    <property type="match status" value="1"/>
</dbReference>
<dbReference type="SMART" id="SM01234">
    <property type="entry name" value="Haemolytic"/>
    <property type="match status" value="1"/>
</dbReference>